<gene>
    <name evidence="15" type="primary">pdm2</name>
    <name evidence="10" type="synonym">dim</name>
    <name evidence="12" type="synonym">OCT2</name>
    <name evidence="11" type="synonym">pdm-2</name>
    <name evidence="13" type="synonym">POU-28</name>
    <name type="ORF">CG12287</name>
</gene>
<organism>
    <name type="scientific">Drosophila melanogaster</name>
    <name type="common">Fruit fly</name>
    <dbReference type="NCBI Taxonomy" id="7227"/>
    <lineage>
        <taxon>Eukaryota</taxon>
        <taxon>Metazoa</taxon>
        <taxon>Ecdysozoa</taxon>
        <taxon>Arthropoda</taxon>
        <taxon>Hexapoda</taxon>
        <taxon>Insecta</taxon>
        <taxon>Pterygota</taxon>
        <taxon>Neoptera</taxon>
        <taxon>Endopterygota</taxon>
        <taxon>Diptera</taxon>
        <taxon>Brachycera</taxon>
        <taxon>Muscomorpha</taxon>
        <taxon>Ephydroidea</taxon>
        <taxon>Drosophilidae</taxon>
        <taxon>Drosophila</taxon>
        <taxon>Sophophora</taxon>
    </lineage>
</organism>
<feature type="chain" id="PRO_0000308166" description="POU domain protein 2, isoform B">
    <location>
        <begin position="1"/>
        <end position="893"/>
    </location>
</feature>
<feature type="domain" description="POU-specific" evidence="3">
    <location>
        <begin position="681"/>
        <end position="755"/>
    </location>
</feature>
<feature type="DNA-binding region" description="Homeobox" evidence="2">
    <location>
        <begin position="786"/>
        <end position="845"/>
    </location>
</feature>
<feature type="region of interest" description="Disordered" evidence="4">
    <location>
        <begin position="586"/>
        <end position="668"/>
    </location>
</feature>
<feature type="compositionally biased region" description="Low complexity" evidence="4">
    <location>
        <begin position="602"/>
        <end position="617"/>
    </location>
</feature>
<feature type="compositionally biased region" description="Polar residues" evidence="4">
    <location>
        <begin position="623"/>
        <end position="646"/>
    </location>
</feature>
<feature type="compositionally biased region" description="Low complexity" evidence="4">
    <location>
        <begin position="647"/>
        <end position="665"/>
    </location>
</feature>
<feature type="sequence conflict" description="In Ref. 3; AAQ23575." evidence="14" ref="3">
    <original>R</original>
    <variation>G</variation>
    <location>
        <position position="618"/>
    </location>
</feature>
<reference evidence="15" key="1">
    <citation type="journal article" date="2000" name="Science">
        <title>The genome sequence of Drosophila melanogaster.</title>
        <authorList>
            <person name="Adams M.D."/>
            <person name="Celniker S.E."/>
            <person name="Holt R.A."/>
            <person name="Evans C.A."/>
            <person name="Gocayne J.D."/>
            <person name="Amanatides P.G."/>
            <person name="Scherer S.E."/>
            <person name="Li P.W."/>
            <person name="Hoskins R.A."/>
            <person name="Galle R.F."/>
            <person name="George R.A."/>
            <person name="Lewis S.E."/>
            <person name="Richards S."/>
            <person name="Ashburner M."/>
            <person name="Henderson S.N."/>
            <person name="Sutton G.G."/>
            <person name="Wortman J.R."/>
            <person name="Yandell M.D."/>
            <person name="Zhang Q."/>
            <person name="Chen L.X."/>
            <person name="Brandon R.C."/>
            <person name="Rogers Y.-H.C."/>
            <person name="Blazej R.G."/>
            <person name="Champe M."/>
            <person name="Pfeiffer B.D."/>
            <person name="Wan K.H."/>
            <person name="Doyle C."/>
            <person name="Baxter E.G."/>
            <person name="Helt G."/>
            <person name="Nelson C.R."/>
            <person name="Miklos G.L.G."/>
            <person name="Abril J.F."/>
            <person name="Agbayani A."/>
            <person name="An H.-J."/>
            <person name="Andrews-Pfannkoch C."/>
            <person name="Baldwin D."/>
            <person name="Ballew R.M."/>
            <person name="Basu A."/>
            <person name="Baxendale J."/>
            <person name="Bayraktaroglu L."/>
            <person name="Beasley E.M."/>
            <person name="Beeson K.Y."/>
            <person name="Benos P.V."/>
            <person name="Berman B.P."/>
            <person name="Bhandari D."/>
            <person name="Bolshakov S."/>
            <person name="Borkova D."/>
            <person name="Botchan M.R."/>
            <person name="Bouck J."/>
            <person name="Brokstein P."/>
            <person name="Brottier P."/>
            <person name="Burtis K.C."/>
            <person name="Busam D.A."/>
            <person name="Butler H."/>
            <person name="Cadieu E."/>
            <person name="Center A."/>
            <person name="Chandra I."/>
            <person name="Cherry J.M."/>
            <person name="Cawley S."/>
            <person name="Dahlke C."/>
            <person name="Davenport L.B."/>
            <person name="Davies P."/>
            <person name="de Pablos B."/>
            <person name="Delcher A."/>
            <person name="Deng Z."/>
            <person name="Mays A.D."/>
            <person name="Dew I."/>
            <person name="Dietz S.M."/>
            <person name="Dodson K."/>
            <person name="Doup L.E."/>
            <person name="Downes M."/>
            <person name="Dugan-Rocha S."/>
            <person name="Dunkov B.C."/>
            <person name="Dunn P."/>
            <person name="Durbin K.J."/>
            <person name="Evangelista C.C."/>
            <person name="Ferraz C."/>
            <person name="Ferriera S."/>
            <person name="Fleischmann W."/>
            <person name="Fosler C."/>
            <person name="Gabrielian A.E."/>
            <person name="Garg N.S."/>
            <person name="Gelbart W.M."/>
            <person name="Glasser K."/>
            <person name="Glodek A."/>
            <person name="Gong F."/>
            <person name="Gorrell J.H."/>
            <person name="Gu Z."/>
            <person name="Guan P."/>
            <person name="Harris M."/>
            <person name="Harris N.L."/>
            <person name="Harvey D.A."/>
            <person name="Heiman T.J."/>
            <person name="Hernandez J.R."/>
            <person name="Houck J."/>
            <person name="Hostin D."/>
            <person name="Houston K.A."/>
            <person name="Howland T.J."/>
            <person name="Wei M.-H."/>
            <person name="Ibegwam C."/>
            <person name="Jalali M."/>
            <person name="Kalush F."/>
            <person name="Karpen G.H."/>
            <person name="Ke Z."/>
            <person name="Kennison J.A."/>
            <person name="Ketchum K.A."/>
            <person name="Kimmel B.E."/>
            <person name="Kodira C.D."/>
            <person name="Kraft C.L."/>
            <person name="Kravitz S."/>
            <person name="Kulp D."/>
            <person name="Lai Z."/>
            <person name="Lasko P."/>
            <person name="Lei Y."/>
            <person name="Levitsky A.A."/>
            <person name="Li J.H."/>
            <person name="Li Z."/>
            <person name="Liang Y."/>
            <person name="Lin X."/>
            <person name="Liu X."/>
            <person name="Mattei B."/>
            <person name="McIntosh T.C."/>
            <person name="McLeod M.P."/>
            <person name="McPherson D."/>
            <person name="Merkulov G."/>
            <person name="Milshina N.V."/>
            <person name="Mobarry C."/>
            <person name="Morris J."/>
            <person name="Moshrefi A."/>
            <person name="Mount S.M."/>
            <person name="Moy M."/>
            <person name="Murphy B."/>
            <person name="Murphy L."/>
            <person name="Muzny D.M."/>
            <person name="Nelson D.L."/>
            <person name="Nelson D.R."/>
            <person name="Nelson K.A."/>
            <person name="Nixon K."/>
            <person name="Nusskern D.R."/>
            <person name="Pacleb J.M."/>
            <person name="Palazzolo M."/>
            <person name="Pittman G.S."/>
            <person name="Pan S."/>
            <person name="Pollard J."/>
            <person name="Puri V."/>
            <person name="Reese M.G."/>
            <person name="Reinert K."/>
            <person name="Remington K."/>
            <person name="Saunders R.D.C."/>
            <person name="Scheeler F."/>
            <person name="Shen H."/>
            <person name="Shue B.C."/>
            <person name="Siden-Kiamos I."/>
            <person name="Simpson M."/>
            <person name="Skupski M.P."/>
            <person name="Smith T.J."/>
            <person name="Spier E."/>
            <person name="Spradling A.C."/>
            <person name="Stapleton M."/>
            <person name="Strong R."/>
            <person name="Sun E."/>
            <person name="Svirskas R."/>
            <person name="Tector C."/>
            <person name="Turner R."/>
            <person name="Venter E."/>
            <person name="Wang A.H."/>
            <person name="Wang X."/>
            <person name="Wang Z.-Y."/>
            <person name="Wassarman D.A."/>
            <person name="Weinstock G.M."/>
            <person name="Weissenbach J."/>
            <person name="Williams S.M."/>
            <person name="Woodage T."/>
            <person name="Worley K.C."/>
            <person name="Wu D."/>
            <person name="Yang S."/>
            <person name="Yao Q.A."/>
            <person name="Ye J."/>
            <person name="Yeh R.-F."/>
            <person name="Zaveri J.S."/>
            <person name="Zhan M."/>
            <person name="Zhang G."/>
            <person name="Zhao Q."/>
            <person name="Zheng L."/>
            <person name="Zheng X.H."/>
            <person name="Zhong F.N."/>
            <person name="Zhong W."/>
            <person name="Zhou X."/>
            <person name="Zhu S.C."/>
            <person name="Zhu X."/>
            <person name="Smith H.O."/>
            <person name="Gibbs R.A."/>
            <person name="Myers E.W."/>
            <person name="Rubin G.M."/>
            <person name="Venter J.C."/>
        </authorList>
    </citation>
    <scope>NUCLEOTIDE SEQUENCE [LARGE SCALE GENOMIC DNA]</scope>
    <source>
        <strain evidence="5">Berkeley</strain>
    </source>
</reference>
<reference evidence="14 15" key="2">
    <citation type="journal article" date="2002" name="Genome Biol.">
        <title>Annotation of the Drosophila melanogaster euchromatic genome: a systematic review.</title>
        <authorList>
            <person name="Misra S."/>
            <person name="Crosby M.A."/>
            <person name="Mungall C.J."/>
            <person name="Matthews B.B."/>
            <person name="Campbell K.S."/>
            <person name="Hradecky P."/>
            <person name="Huang Y."/>
            <person name="Kaminker J.S."/>
            <person name="Millburn G.H."/>
            <person name="Prochnik S.E."/>
            <person name="Smith C.D."/>
            <person name="Tupy J.L."/>
            <person name="Whitfield E.J."/>
            <person name="Bayraktaroglu L."/>
            <person name="Berman B.P."/>
            <person name="Bettencourt B.R."/>
            <person name="Celniker S.E."/>
            <person name="de Grey A.D.N.J."/>
            <person name="Drysdale R.A."/>
            <person name="Harris N.L."/>
            <person name="Richter J."/>
            <person name="Russo S."/>
            <person name="Schroeder A.J."/>
            <person name="Shu S.Q."/>
            <person name="Stapleton M."/>
            <person name="Yamada C."/>
            <person name="Ashburner M."/>
            <person name="Gelbart W.M."/>
            <person name="Rubin G.M."/>
            <person name="Lewis S.E."/>
        </authorList>
    </citation>
    <scope>GENOME REANNOTATION</scope>
    <scope>ALTERNATIVE SPLICING</scope>
    <source>
        <strain>Berkeley</strain>
    </source>
</reference>
<reference evidence="16" key="3">
    <citation type="submission" date="2003-08" db="EMBL/GenBank/DDBJ databases">
        <authorList>
            <person name="Stapleton M."/>
            <person name="Brokstein P."/>
            <person name="Hong L."/>
            <person name="Agbayani A."/>
            <person name="Carlson J.W."/>
            <person name="Champe M."/>
            <person name="Chavez C."/>
            <person name="Dorsett V."/>
            <person name="Dresnek D."/>
            <person name="Farfan D."/>
            <person name="Frise E."/>
            <person name="George R.A."/>
            <person name="Gonzalez M."/>
            <person name="Guarin H."/>
            <person name="Kronmiller B."/>
            <person name="Li P.W."/>
            <person name="Liao G."/>
            <person name="Miranda A."/>
            <person name="Mungall C.J."/>
            <person name="Nunoo J."/>
            <person name="Pacleb J.M."/>
            <person name="Paragas V."/>
            <person name="Park S."/>
            <person name="Patel S."/>
            <person name="Phouanenavong S."/>
            <person name="Wan K.H."/>
            <person name="Yu C."/>
            <person name="Lewis S.E."/>
            <person name="Rubin G.M."/>
            <person name="Celniker S.E."/>
        </authorList>
    </citation>
    <scope>NUCLEOTIDE SEQUENCE [LARGE SCALE MRNA]</scope>
    <source>
        <strain evidence="16">Berkeley</strain>
        <tissue>Embryo</tissue>
    </source>
</reference>
<reference evidence="14" key="4">
    <citation type="journal article" date="1991" name="Mech. Dev.">
        <title>Isolation of a family of Drosophila POU domain genes expressed in early development.</title>
        <authorList>
            <person name="Billin A.N."/>
            <person name="Cockerill K.A."/>
            <person name="Poole S.J."/>
        </authorList>
    </citation>
    <scope>FUNCTION</scope>
    <scope>TISSUE SPECIFICITY</scope>
    <scope>DEVELOPMENTAL STAGE</scope>
    <source>
        <strain evidence="7">Oregon-R</strain>
        <tissue evidence="7">Embryo</tissue>
    </source>
</reference>
<reference evidence="14" key="5">
    <citation type="journal article" date="1991" name="Mech. Dev.">
        <title>Characterization of two Drosophila POU domain genes, related to oct-1 and oct-2, and the regulation of their expression patterns.</title>
        <authorList>
            <person name="Lloyd A."/>
            <person name="Sakonju S."/>
        </authorList>
    </citation>
    <scope>FUNCTION</scope>
    <scope>TISSUE SPECIFICITY</scope>
    <scope>DEVELOPMENTAL STAGE</scope>
</reference>
<reference evidence="14" key="6">
    <citation type="journal article" date="1991" name="Proc. Natl. Acad. Sci. U.S.A.">
        <title>Two closely linked Drosophila POU domain genes are expressed in neuroblasts and sensory elements.</title>
        <authorList>
            <person name="Dick T."/>
            <person name="Yang X."/>
            <person name="Yeo S."/>
            <person name="Chia W."/>
        </authorList>
    </citation>
    <scope>FUNCTION</scope>
    <scope>TISSUE SPECIFICITY</scope>
    <source>
        <tissue evidence="9">Embryo</tissue>
    </source>
</reference>
<reference evidence="14" key="7">
    <citation type="journal article" date="1992" name="Proc. Natl. Acad. Sci. U.S.A.">
        <title>dOct2, a Drosophila Oct transcription factor that functions in yeast.</title>
        <authorList>
            <person name="Prakash K."/>
            <person name="Fang X.D."/>
            <person name="Engelberg D."/>
            <person name="Behal A."/>
            <person name="Parker C.S."/>
        </authorList>
    </citation>
    <scope>FUNCTION</scope>
    <scope>TISSUE SPECIFICITY</scope>
    <source>
        <tissue evidence="6">Embryo</tissue>
    </source>
</reference>
<name>PDM2B_DROME</name>
<evidence type="ECO:0000255" key="1"/>
<evidence type="ECO:0000255" key="2">
    <source>
        <dbReference type="PROSITE-ProRule" id="PRU00108"/>
    </source>
</evidence>
<evidence type="ECO:0000255" key="3">
    <source>
        <dbReference type="PROSITE-ProRule" id="PRU00530"/>
    </source>
</evidence>
<evidence type="ECO:0000256" key="4">
    <source>
        <dbReference type="SAM" id="MobiDB-lite"/>
    </source>
</evidence>
<evidence type="ECO:0000269" key="5">
    <source>
    </source>
</evidence>
<evidence type="ECO:0000269" key="6">
    <source>
    </source>
</evidence>
<evidence type="ECO:0000269" key="7">
    <source>
    </source>
</evidence>
<evidence type="ECO:0000269" key="8">
    <source>
    </source>
</evidence>
<evidence type="ECO:0000269" key="9">
    <source>
    </source>
</evidence>
<evidence type="ECO:0000303" key="10">
    <source>
    </source>
</evidence>
<evidence type="ECO:0000303" key="11">
    <source>
    </source>
</evidence>
<evidence type="ECO:0000303" key="12">
    <source>
    </source>
</evidence>
<evidence type="ECO:0000303" key="13">
    <source>
    </source>
</evidence>
<evidence type="ECO:0000305" key="14"/>
<evidence type="ECO:0000312" key="15">
    <source>
        <dbReference type="EMBL" id="AAF53208.2"/>
    </source>
</evidence>
<evidence type="ECO:0000312" key="16">
    <source>
        <dbReference type="EMBL" id="AAQ23575.1"/>
    </source>
</evidence>
<dbReference type="EMBL" id="AE014134">
    <property type="protein sequence ID" value="AAF53208.2"/>
    <property type="molecule type" value="Genomic_DNA"/>
</dbReference>
<dbReference type="EMBL" id="BT010257">
    <property type="protein sequence ID" value="AAQ23575.1"/>
    <property type="molecule type" value="mRNA"/>
</dbReference>
<dbReference type="RefSeq" id="NP_001285877.1">
    <molecule id="Q9VK71-1"/>
    <property type="nucleotide sequence ID" value="NM_001298948.1"/>
</dbReference>
<dbReference type="RefSeq" id="NP_001285878.1">
    <molecule id="Q9VK71-1"/>
    <property type="nucleotide sequence ID" value="NM_001298949.1"/>
</dbReference>
<dbReference type="RefSeq" id="NP_723763.1">
    <molecule id="Q9VK71-1"/>
    <property type="nucleotide sequence ID" value="NM_165017.2"/>
</dbReference>
<dbReference type="SMR" id="Q9VK71"/>
<dbReference type="BioGRID" id="60717">
    <property type="interactions" value="13"/>
</dbReference>
<dbReference type="FunCoup" id="Q9VK71">
    <property type="interactions" value="30"/>
</dbReference>
<dbReference type="IntAct" id="Q9VK71">
    <property type="interactions" value="1"/>
</dbReference>
<dbReference type="STRING" id="7227.FBpp0309439"/>
<dbReference type="GlyGen" id="Q9VK71">
    <property type="glycosylation" value="3 sites"/>
</dbReference>
<dbReference type="PaxDb" id="7227-FBpp0079973"/>
<dbReference type="DNASU" id="34673"/>
<dbReference type="EnsemblMetazoa" id="FBtr0080392">
    <molecule id="Q9VK71-1"/>
    <property type="protein sequence ID" value="FBpp0079973"/>
    <property type="gene ID" value="FBgn0004394"/>
</dbReference>
<dbReference type="EnsemblMetazoa" id="FBtr0340539">
    <molecule id="Q9VK71-1"/>
    <property type="protein sequence ID" value="FBpp0309438"/>
    <property type="gene ID" value="FBgn0004394"/>
</dbReference>
<dbReference type="EnsemblMetazoa" id="FBtr0340540">
    <molecule id="Q9VK71-1"/>
    <property type="protein sequence ID" value="FBpp0309439"/>
    <property type="gene ID" value="FBgn0004394"/>
</dbReference>
<dbReference type="GeneID" id="34673"/>
<dbReference type="KEGG" id="dme:Dmel_CG12287"/>
<dbReference type="AGR" id="FB:FBgn0004394"/>
<dbReference type="CTD" id="34673"/>
<dbReference type="FlyBase" id="FBgn0004394">
    <property type="gene designation" value="pdm2"/>
</dbReference>
<dbReference type="VEuPathDB" id="VectorBase:FBgn0004394"/>
<dbReference type="eggNOG" id="KOG3802">
    <property type="taxonomic scope" value="Eukaryota"/>
</dbReference>
<dbReference type="HOGENOM" id="CLU_013065_5_0_1"/>
<dbReference type="InParanoid" id="Q9VK71"/>
<dbReference type="OMA" id="THGNNSH"/>
<dbReference type="OrthoDB" id="6358449at2759"/>
<dbReference type="PhylomeDB" id="Q9VK71"/>
<dbReference type="Reactome" id="R-DME-373752">
    <property type="pathway name" value="Netrin-1 signaling"/>
</dbReference>
<dbReference type="Reactome" id="R-DME-418885">
    <property type="pathway name" value="DCC mediated attractive signaling"/>
</dbReference>
<dbReference type="Reactome" id="R-DME-418886">
    <property type="pathway name" value="Netrin mediated repulsion signals"/>
</dbReference>
<dbReference type="BioGRID-ORCS" id="34673">
    <property type="hits" value="0 hits in 3 CRISPR screens"/>
</dbReference>
<dbReference type="GenomeRNAi" id="34673"/>
<dbReference type="Proteomes" id="UP000000803">
    <property type="component" value="Chromosome 2L"/>
</dbReference>
<dbReference type="Bgee" id="FBgn0004394">
    <property type="expression patterns" value="Expressed in presumptive embryonic/larval peripheral nervous system (Drosophila) and 102 other cell types or tissues"/>
</dbReference>
<dbReference type="ExpressionAtlas" id="Q9VK71">
    <property type="expression patterns" value="baseline and differential"/>
</dbReference>
<dbReference type="GO" id="GO:0005634">
    <property type="term" value="C:nucleus"/>
    <property type="evidence" value="ECO:0000315"/>
    <property type="project" value="UniProtKB"/>
</dbReference>
<dbReference type="GO" id="GO:0003677">
    <property type="term" value="F:DNA binding"/>
    <property type="evidence" value="ECO:0000315"/>
    <property type="project" value="UniProtKB"/>
</dbReference>
<dbReference type="GO" id="GO:0001228">
    <property type="term" value="F:DNA-binding transcription activator activity, RNA polymerase II-specific"/>
    <property type="evidence" value="ECO:0000314"/>
    <property type="project" value="FlyBase"/>
</dbReference>
<dbReference type="GO" id="GO:0000981">
    <property type="term" value="F:DNA-binding transcription factor activity, RNA polymerase II-specific"/>
    <property type="evidence" value="ECO:0000318"/>
    <property type="project" value="GO_Central"/>
</dbReference>
<dbReference type="GO" id="GO:0000978">
    <property type="term" value="F:RNA polymerase II cis-regulatory region sequence-specific DNA binding"/>
    <property type="evidence" value="ECO:0000318"/>
    <property type="project" value="GO_Central"/>
</dbReference>
<dbReference type="GO" id="GO:0007417">
    <property type="term" value="P:central nervous system development"/>
    <property type="evidence" value="ECO:0000315"/>
    <property type="project" value="UniProtKB"/>
</dbReference>
<dbReference type="GO" id="GO:0007398">
    <property type="term" value="P:ectoderm development"/>
    <property type="evidence" value="ECO:0000315"/>
    <property type="project" value="UniProtKB"/>
</dbReference>
<dbReference type="GO" id="GO:0048699">
    <property type="term" value="P:generation of neurons"/>
    <property type="evidence" value="ECO:0000315"/>
    <property type="project" value="FlyBase"/>
</dbReference>
<dbReference type="GO" id="GO:0014019">
    <property type="term" value="P:neuroblast development"/>
    <property type="evidence" value="ECO:0000315"/>
    <property type="project" value="FlyBase"/>
</dbReference>
<dbReference type="GO" id="GO:0006355">
    <property type="term" value="P:regulation of DNA-templated transcription"/>
    <property type="evidence" value="ECO:0000315"/>
    <property type="project" value="UniProtKB"/>
</dbReference>
<dbReference type="GO" id="GO:2000177">
    <property type="term" value="P:regulation of neural precursor cell proliferation"/>
    <property type="evidence" value="ECO:0000316"/>
    <property type="project" value="FlyBase"/>
</dbReference>
<dbReference type="GO" id="GO:0006357">
    <property type="term" value="P:regulation of transcription by RNA polymerase II"/>
    <property type="evidence" value="ECO:0000318"/>
    <property type="project" value="GO_Central"/>
</dbReference>
<dbReference type="CDD" id="cd00086">
    <property type="entry name" value="homeodomain"/>
    <property type="match status" value="1"/>
</dbReference>
<dbReference type="FunFam" id="1.10.260.40:FF:000001">
    <property type="entry name" value="POU domain protein"/>
    <property type="match status" value="1"/>
</dbReference>
<dbReference type="Gene3D" id="1.10.10.60">
    <property type="entry name" value="Homeodomain-like"/>
    <property type="match status" value="1"/>
</dbReference>
<dbReference type="Gene3D" id="1.10.260.40">
    <property type="entry name" value="lambda repressor-like DNA-binding domains"/>
    <property type="match status" value="1"/>
</dbReference>
<dbReference type="InterPro" id="IPR001356">
    <property type="entry name" value="HD"/>
</dbReference>
<dbReference type="InterPro" id="IPR017970">
    <property type="entry name" value="Homeobox_CS"/>
</dbReference>
<dbReference type="InterPro" id="IPR009057">
    <property type="entry name" value="Homeodomain-like_sf"/>
</dbReference>
<dbReference type="InterPro" id="IPR010982">
    <property type="entry name" value="Lambda_DNA-bd_dom_sf"/>
</dbReference>
<dbReference type="InterPro" id="IPR013847">
    <property type="entry name" value="POU"/>
</dbReference>
<dbReference type="InterPro" id="IPR000327">
    <property type="entry name" value="POU_dom"/>
</dbReference>
<dbReference type="InterPro" id="IPR050255">
    <property type="entry name" value="POU_domain_TF"/>
</dbReference>
<dbReference type="PANTHER" id="PTHR11636">
    <property type="entry name" value="POU DOMAIN"/>
    <property type="match status" value="1"/>
</dbReference>
<dbReference type="PANTHER" id="PTHR11636:SF89">
    <property type="entry name" value="POU DOMAIN PROTEIN 2, ISOFORM B-RELATED"/>
    <property type="match status" value="1"/>
</dbReference>
<dbReference type="Pfam" id="PF00046">
    <property type="entry name" value="Homeodomain"/>
    <property type="match status" value="1"/>
</dbReference>
<dbReference type="Pfam" id="PF00157">
    <property type="entry name" value="Pou"/>
    <property type="match status" value="1"/>
</dbReference>
<dbReference type="PRINTS" id="PR00028">
    <property type="entry name" value="POUDOMAIN"/>
</dbReference>
<dbReference type="SMART" id="SM00389">
    <property type="entry name" value="HOX"/>
    <property type="match status" value="1"/>
</dbReference>
<dbReference type="SMART" id="SM00352">
    <property type="entry name" value="POU"/>
    <property type="match status" value="1"/>
</dbReference>
<dbReference type="SUPFAM" id="SSF46689">
    <property type="entry name" value="Homeodomain-like"/>
    <property type="match status" value="1"/>
</dbReference>
<dbReference type="SUPFAM" id="SSF47413">
    <property type="entry name" value="lambda repressor-like DNA-binding domains"/>
    <property type="match status" value="1"/>
</dbReference>
<dbReference type="PROSITE" id="PS00027">
    <property type="entry name" value="HOMEOBOX_1"/>
    <property type="match status" value="1"/>
</dbReference>
<dbReference type="PROSITE" id="PS50071">
    <property type="entry name" value="HOMEOBOX_2"/>
    <property type="match status" value="1"/>
</dbReference>
<dbReference type="PROSITE" id="PS00035">
    <property type="entry name" value="POU_1"/>
    <property type="match status" value="1"/>
</dbReference>
<dbReference type="PROSITE" id="PS00465">
    <property type="entry name" value="POU_2"/>
    <property type="match status" value="1"/>
</dbReference>
<dbReference type="PROSITE" id="PS51179">
    <property type="entry name" value="POU_3"/>
    <property type="match status" value="1"/>
</dbReference>
<sequence>MPLLLATTLANNSHHQHLSTTATETAAAAATAKAAATAAAAATATMLLTSPTAATHCLAAATSAAGVNVQITGQGVSATLNDDQLQLPANYAANVGHLNGFNPKDNCPPVPPTSERAFEGLLRLPQIQVKQEFMESPPERPSCHPMNHQQAPANSALATSCRGKTILNPWYLRPADGIGYHNYNSNNNNSGSGEINKDVSQQMTSACGGSDGQTCLPVSYFGMETLASVKQRQKSLPDFLIPLHEIMFQQQHHYQQRTMGTLINSLPPGLVGYPPQKTETFKSLTPPKALQHHQNNQNHQIPQNHTGDHSFVRHFHERDRLIREHQLKHQQLRDVEEVLQEQEQDEEQEHETLRKPHVVPSELEHNHHWHGVVCDANGHATRLLHIAPPRAGPTPLPTHQQPPVGEVLPPNSTSFSTIVDPPKEPSIYEQPAPNGRHCRPANKVMRHMSNSPTPPSPLRSLSDCGKSFEEEELELGENCEMPQNLSSKRQARELDSELENEVLDLAPPPKRLAEEQEEEKVASVNPPQPVAFAPEEMHQALQLQLHSYIEMVRQLAPEAFPNPNLATQFLLQNSLQALAQFQALQQMKQQQREDPLPSYSTPLAKSPLRSPSLSPVPRHSKSQQRTPPNSMTANSLGMSSAVMTPNTPSMQQQPQLQQSTPKPTSGLTVASAMAKLEQSPEETTDLEELEQFAKTFKQRRIKLGFTQGDVGLAMGKLYGNDFSQTTISRFEALNLSFKNMCKLKPLLQKWLEDADSTVAKSGGGVFNINTMTSTLSSTPESILGRRRKKRTSIETTVRTTLEKAFLMNCKPTSEEISQLSERLNMDKEVIRVWFCNRRQKEKRINPSLDLDSPTGTPLSSHAFGYPPQALNMSHMQMEGGSGSFCGSSISSGE</sequence>
<protein>
    <recommendedName>
        <fullName>POU domain protein 2, isoform B</fullName>
    </recommendedName>
    <alternativeName>
        <fullName>Miti-mere</fullName>
    </alternativeName>
    <alternativeName>
        <fullName>Pdm-2</fullName>
    </alternativeName>
    <alternativeName>
        <fullName>Protein didymous</fullName>
    </alternativeName>
    <alternativeName>
        <fullName>dOct2</fullName>
    </alternativeName>
    <alternativeName>
        <fullName>dPOU-28</fullName>
    </alternativeName>
</protein>
<keyword id="KW-0010">Activator</keyword>
<keyword id="KW-0025">Alternative splicing</keyword>
<keyword id="KW-0217">Developmental protein</keyword>
<keyword id="KW-0238">DNA-binding</keyword>
<keyword id="KW-0371">Homeobox</keyword>
<keyword id="KW-0539">Nucleus</keyword>
<keyword id="KW-1185">Reference proteome</keyword>
<keyword id="KW-0804">Transcription</keyword>
<keyword id="KW-0805">Transcription regulation</keyword>
<comment type="function">
    <text evidence="6 7 8 9">DNA-binding regulatory protein implicated in early development. Involved in neuronal cell fate decision. May act as an octamer-dependent activator of transcription. Could also play an early role in specific ectodermal cells, and a subsequent role in the embryonic nervous system.</text>
</comment>
<comment type="subcellular location">
    <subcellularLocation>
        <location evidence="1">Nucleus</location>
    </subcellularLocation>
</comment>
<comment type="alternative products">
    <event type="alternative splicing"/>
    <isoform>
        <id>Q9VK71-1</id>
        <name evidence="5">B</name>
        <sequence type="displayed"/>
    </isoform>
    <isoform>
        <id>P31369-1</id>
        <name evidence="5">A</name>
        <sequence type="external"/>
    </isoform>
</comment>
<comment type="tissue specificity">
    <text evidence="6 7 8 9">Initial expression in cellular blastoderm stage, then in ectodermal stripes during germband extension. Broad expression in the neuroectoderm followed by limitation to discrete subsets of CNS cells, and expression in specific PNS neurons and support cells.</text>
</comment>
<comment type="developmental stage">
    <text evidence="7 8">Expressed primarily during the first half of embryogenesis.</text>
</comment>
<comment type="similarity">
    <text evidence="1">Belongs to the POU transcription factor family. Class-2 subfamily.</text>
</comment>
<proteinExistence type="evidence at transcript level"/>
<accession>Q9VK71</accession>
<accession>Q6NR25</accession>